<keyword id="KW-1185">Reference proteome</keyword>
<keyword id="KW-0687">Ribonucleoprotein</keyword>
<keyword id="KW-0689">Ribosomal protein</keyword>
<dbReference type="EMBL" id="CP000049">
    <property type="protein sequence ID" value="AAX18020.1"/>
    <property type="molecule type" value="Genomic_DNA"/>
</dbReference>
<dbReference type="RefSeq" id="WP_011772638.1">
    <property type="nucleotide sequence ID" value="NZ_CP073176.1"/>
</dbReference>
<dbReference type="SMR" id="A1R0C8"/>
<dbReference type="KEGG" id="btu:BT0703"/>
<dbReference type="eggNOG" id="COG0333">
    <property type="taxonomic scope" value="Bacteria"/>
</dbReference>
<dbReference type="HOGENOM" id="CLU_129084_1_0_12"/>
<dbReference type="Proteomes" id="UP000001205">
    <property type="component" value="Chromosome"/>
</dbReference>
<dbReference type="GO" id="GO:0015934">
    <property type="term" value="C:large ribosomal subunit"/>
    <property type="evidence" value="ECO:0007669"/>
    <property type="project" value="InterPro"/>
</dbReference>
<dbReference type="GO" id="GO:0003735">
    <property type="term" value="F:structural constituent of ribosome"/>
    <property type="evidence" value="ECO:0007669"/>
    <property type="project" value="InterPro"/>
</dbReference>
<dbReference type="GO" id="GO:0006412">
    <property type="term" value="P:translation"/>
    <property type="evidence" value="ECO:0007669"/>
    <property type="project" value="UniProtKB-UniRule"/>
</dbReference>
<dbReference type="HAMAP" id="MF_00340">
    <property type="entry name" value="Ribosomal_bL32"/>
    <property type="match status" value="1"/>
</dbReference>
<dbReference type="InterPro" id="IPR002677">
    <property type="entry name" value="Ribosomal_bL32"/>
</dbReference>
<dbReference type="InterPro" id="IPR044957">
    <property type="entry name" value="Ribosomal_bL32_bact"/>
</dbReference>
<dbReference type="InterPro" id="IPR011332">
    <property type="entry name" value="Ribosomal_zn-bd"/>
</dbReference>
<dbReference type="NCBIfam" id="TIGR01031">
    <property type="entry name" value="rpmF_bact"/>
    <property type="match status" value="1"/>
</dbReference>
<dbReference type="PANTHER" id="PTHR35534">
    <property type="entry name" value="50S RIBOSOMAL PROTEIN L32"/>
    <property type="match status" value="1"/>
</dbReference>
<dbReference type="PANTHER" id="PTHR35534:SF1">
    <property type="entry name" value="LARGE RIBOSOMAL SUBUNIT PROTEIN BL32"/>
    <property type="match status" value="1"/>
</dbReference>
<dbReference type="Pfam" id="PF01783">
    <property type="entry name" value="Ribosomal_L32p"/>
    <property type="match status" value="1"/>
</dbReference>
<dbReference type="SUPFAM" id="SSF57829">
    <property type="entry name" value="Zn-binding ribosomal proteins"/>
    <property type="match status" value="1"/>
</dbReference>
<sequence length="60" mass="7035">MAVPKFKPSKSRSRTRRSINMRKKIPQFQECSNCGNLAVRHRVCVKCGYYRNSQYLELGL</sequence>
<proteinExistence type="inferred from homology"/>
<organism>
    <name type="scientific">Borrelia turicatae (strain 91E135)</name>
    <dbReference type="NCBI Taxonomy" id="314724"/>
    <lineage>
        <taxon>Bacteria</taxon>
        <taxon>Pseudomonadati</taxon>
        <taxon>Spirochaetota</taxon>
        <taxon>Spirochaetia</taxon>
        <taxon>Spirochaetales</taxon>
        <taxon>Borreliaceae</taxon>
        <taxon>Borrelia</taxon>
    </lineage>
</organism>
<gene>
    <name evidence="1" type="primary">rpmF</name>
    <name type="ordered locus">BT0703</name>
</gene>
<protein>
    <recommendedName>
        <fullName evidence="1">Large ribosomal subunit protein bL32</fullName>
    </recommendedName>
    <alternativeName>
        <fullName evidence="2">50S ribosomal protein L32</fullName>
    </alternativeName>
</protein>
<name>RL32_BORT9</name>
<evidence type="ECO:0000255" key="1">
    <source>
        <dbReference type="HAMAP-Rule" id="MF_00340"/>
    </source>
</evidence>
<evidence type="ECO:0000305" key="2"/>
<reference key="1">
    <citation type="submission" date="2004-12" db="EMBL/GenBank/DDBJ databases">
        <title>The genome sequence of Borrelia hermsii and Borrelia turicatae: comparative analysis of two agents of endemic N. America relapsing fever.</title>
        <authorList>
            <person name="Porcella S.F."/>
            <person name="Raffel S.J."/>
            <person name="Schrumpf M.E."/>
            <person name="Montgomery B."/>
            <person name="Smith T."/>
            <person name="Schwan T.G."/>
        </authorList>
    </citation>
    <scope>NUCLEOTIDE SEQUENCE [LARGE SCALE GENOMIC DNA]</scope>
    <source>
        <strain>91E135</strain>
    </source>
</reference>
<accession>A1R0C8</accession>
<comment type="similarity">
    <text evidence="1">Belongs to the bacterial ribosomal protein bL32 family.</text>
</comment>
<feature type="chain" id="PRO_1000195960" description="Large ribosomal subunit protein bL32">
    <location>
        <begin position="1"/>
        <end position="60"/>
    </location>
</feature>